<proteinExistence type="inferred from homology"/>
<organism>
    <name type="scientific">Streptococcus pneumoniae (strain ATCC BAA-255 / R6)</name>
    <dbReference type="NCBI Taxonomy" id="171101"/>
    <lineage>
        <taxon>Bacteria</taxon>
        <taxon>Bacillati</taxon>
        <taxon>Bacillota</taxon>
        <taxon>Bacilli</taxon>
        <taxon>Lactobacillales</taxon>
        <taxon>Streptococcaceae</taxon>
        <taxon>Streptococcus</taxon>
    </lineage>
</organism>
<accession>Q8DRH8</accession>
<name>MNMG_STRR6</name>
<keyword id="KW-0963">Cytoplasm</keyword>
<keyword id="KW-0274">FAD</keyword>
<keyword id="KW-0285">Flavoprotein</keyword>
<keyword id="KW-0520">NAD</keyword>
<keyword id="KW-1185">Reference proteome</keyword>
<keyword id="KW-0819">tRNA processing</keyword>
<feature type="chain" id="PRO_0000117188" description="tRNA uridine 5-carboxymethylaminomethyl modification enzyme MnmG">
    <location>
        <begin position="1"/>
        <end position="637"/>
    </location>
</feature>
<feature type="binding site" evidence="1">
    <location>
        <begin position="15"/>
        <end position="20"/>
    </location>
    <ligand>
        <name>FAD</name>
        <dbReference type="ChEBI" id="CHEBI:57692"/>
    </ligand>
</feature>
<feature type="binding site" evidence="1">
    <location>
        <position position="127"/>
    </location>
    <ligand>
        <name>FAD</name>
        <dbReference type="ChEBI" id="CHEBI:57692"/>
    </ligand>
</feature>
<feature type="binding site" evidence="1">
    <location>
        <position position="182"/>
    </location>
    <ligand>
        <name>FAD</name>
        <dbReference type="ChEBI" id="CHEBI:57692"/>
    </ligand>
</feature>
<feature type="binding site" evidence="1">
    <location>
        <begin position="276"/>
        <end position="290"/>
    </location>
    <ligand>
        <name>NAD(+)</name>
        <dbReference type="ChEBI" id="CHEBI:57540"/>
    </ligand>
</feature>
<feature type="binding site" evidence="1">
    <location>
        <position position="373"/>
    </location>
    <ligand>
        <name>FAD</name>
        <dbReference type="ChEBI" id="CHEBI:57692"/>
    </ligand>
</feature>
<comment type="function">
    <text evidence="1">NAD-binding protein involved in the addition of a carboxymethylaminomethyl (cmnm) group at the wobble position (U34) of certain tRNAs, forming tRNA-cmnm(5)s(2)U34.</text>
</comment>
<comment type="cofactor">
    <cofactor evidence="1">
        <name>FAD</name>
        <dbReference type="ChEBI" id="CHEBI:57692"/>
    </cofactor>
</comment>
<comment type="subunit">
    <text evidence="1">Homodimer. Heterotetramer of two MnmE and two MnmG subunits.</text>
</comment>
<comment type="subcellular location">
    <subcellularLocation>
        <location evidence="1">Cytoplasm</location>
    </subcellularLocation>
</comment>
<comment type="similarity">
    <text evidence="1">Belongs to the MnmG family.</text>
</comment>
<protein>
    <recommendedName>
        <fullName evidence="1">tRNA uridine 5-carboxymethylaminomethyl modification enzyme MnmG</fullName>
    </recommendedName>
    <alternativeName>
        <fullName evidence="1">Glucose-inhibited division protein A</fullName>
    </alternativeName>
</protein>
<reference key="1">
    <citation type="journal article" date="2001" name="J. Bacteriol.">
        <title>Genome of the bacterium Streptococcus pneumoniae strain R6.</title>
        <authorList>
            <person name="Hoskins J."/>
            <person name="Alborn W.E. Jr."/>
            <person name="Arnold J."/>
            <person name="Blaszczak L.C."/>
            <person name="Burgett S."/>
            <person name="DeHoff B.S."/>
            <person name="Estrem S.T."/>
            <person name="Fritz L."/>
            <person name="Fu D.-J."/>
            <person name="Fuller W."/>
            <person name="Geringer C."/>
            <person name="Gilmour R."/>
            <person name="Glass J.S."/>
            <person name="Khoja H."/>
            <person name="Kraft A.R."/>
            <person name="Lagace R.E."/>
            <person name="LeBlanc D.J."/>
            <person name="Lee L.N."/>
            <person name="Lefkowitz E.J."/>
            <person name="Lu J."/>
            <person name="Matsushima P."/>
            <person name="McAhren S.M."/>
            <person name="McHenney M."/>
            <person name="McLeaster K."/>
            <person name="Mundy C.W."/>
            <person name="Nicas T.I."/>
            <person name="Norris F.H."/>
            <person name="O'Gara M."/>
            <person name="Peery R.B."/>
            <person name="Robertson G.T."/>
            <person name="Rockey P."/>
            <person name="Sun P.-M."/>
            <person name="Winkler M.E."/>
            <person name="Yang Y."/>
            <person name="Young-Bellido M."/>
            <person name="Zhao G."/>
            <person name="Zook C.A."/>
            <person name="Baltz R.H."/>
            <person name="Jaskunas S.R."/>
            <person name="Rosteck P.R. Jr."/>
            <person name="Skatrud P.L."/>
            <person name="Glass J.I."/>
        </authorList>
    </citation>
    <scope>NUCLEOTIDE SEQUENCE [LARGE SCALE GENOMIC DNA]</scope>
    <source>
        <strain>ATCC BAA-255 / R6</strain>
    </source>
</reference>
<sequence>MIYHFTEEYDIIVIGAGHAGVEASLAASRMGCKVLLATINIEMLAFMPCNPSIGGSAKGIVVREVDALGGEMAKTIDKTYIQMKMLNTGKGPAVRALRAQADKELYSKEMRKTVENQENLTLRQTMIDEILVEDGKAVGVRTATHQEYAAKAVIVTTGTALRGEIIIGDLKYSSGPNHSLASINLADNLKELGLEIGRFKTGTPPRVKASSINYDVTEIQPGDEVPNHFSYTSRDEDYVKDQVPCWLTYTNGTSHEIIQNNLHRAPMFTGVVKGVGPRYCPSIEDKIVRFADKERHQLFLEPEGRNTEEVYVQGLSTSLPEDVQRDLVHSIKGLENAEMMRTGYAIEYDMVLPHQLRATLETKKISGLFTAGQTNGTSGYEEAAGQGIIAGINAALKIQGKPELILKRSDGYIGVMIDDLVTKGTIEPYRLLTSRAEYRLILRHDNADMRLTEMGREIGLVDDERWARFEIKKNQFDNEMKRLDSIKLKPVKETNAKVEEMGFKPLTDAVTAKEFLRRPEVSYQDVVAFIGPAAEELDDKIIELIETEIKYEGYISKAMDQVAKMKRMEEKRIPANIDWDDIDSIATEARQKFKLINPETIGQASRISGVNPADISILMVYLEGKNRSISKTLQKSK</sequence>
<gene>
    <name evidence="1" type="primary">mnmG</name>
    <name evidence="1" type="synonym">gidA</name>
    <name type="ordered locus">spr0124</name>
</gene>
<evidence type="ECO:0000255" key="1">
    <source>
        <dbReference type="HAMAP-Rule" id="MF_00129"/>
    </source>
</evidence>
<dbReference type="EMBL" id="AE007317">
    <property type="protein sequence ID" value="AAK98928.1"/>
    <property type="molecule type" value="Genomic_DNA"/>
</dbReference>
<dbReference type="PIR" id="D97887">
    <property type="entry name" value="D97887"/>
</dbReference>
<dbReference type="RefSeq" id="NP_357718.1">
    <property type="nucleotide sequence ID" value="NC_003098.1"/>
</dbReference>
<dbReference type="RefSeq" id="WP_000639151.1">
    <property type="nucleotide sequence ID" value="NC_003098.1"/>
</dbReference>
<dbReference type="SMR" id="Q8DRH8"/>
<dbReference type="STRING" id="171101.spr0124"/>
<dbReference type="KEGG" id="spr:spr0124"/>
<dbReference type="PATRIC" id="fig|171101.6.peg.142"/>
<dbReference type="eggNOG" id="COG0445">
    <property type="taxonomic scope" value="Bacteria"/>
</dbReference>
<dbReference type="HOGENOM" id="CLU_007831_2_2_9"/>
<dbReference type="Proteomes" id="UP000000586">
    <property type="component" value="Chromosome"/>
</dbReference>
<dbReference type="GO" id="GO:0005829">
    <property type="term" value="C:cytosol"/>
    <property type="evidence" value="ECO:0000318"/>
    <property type="project" value="GO_Central"/>
</dbReference>
<dbReference type="GO" id="GO:0050660">
    <property type="term" value="F:flavin adenine dinucleotide binding"/>
    <property type="evidence" value="ECO:0000318"/>
    <property type="project" value="GO_Central"/>
</dbReference>
<dbReference type="GO" id="GO:0030488">
    <property type="term" value="P:tRNA methylation"/>
    <property type="evidence" value="ECO:0000318"/>
    <property type="project" value="GO_Central"/>
</dbReference>
<dbReference type="GO" id="GO:0002098">
    <property type="term" value="P:tRNA wobble uridine modification"/>
    <property type="evidence" value="ECO:0000318"/>
    <property type="project" value="GO_Central"/>
</dbReference>
<dbReference type="FunFam" id="1.10.10.1800:FF:000001">
    <property type="entry name" value="tRNA uridine 5-carboxymethylaminomethyl modification enzyme MnmG"/>
    <property type="match status" value="1"/>
</dbReference>
<dbReference type="FunFam" id="1.10.150.570:FF:000001">
    <property type="entry name" value="tRNA uridine 5-carboxymethylaminomethyl modification enzyme MnmG"/>
    <property type="match status" value="1"/>
</dbReference>
<dbReference type="FunFam" id="3.50.50.60:FF:000002">
    <property type="entry name" value="tRNA uridine 5-carboxymethylaminomethyl modification enzyme MnmG"/>
    <property type="match status" value="1"/>
</dbReference>
<dbReference type="FunFam" id="3.50.50.60:FF:000063">
    <property type="entry name" value="tRNA uridine 5-carboxymethylaminomethyl modification enzyme MnmG"/>
    <property type="match status" value="1"/>
</dbReference>
<dbReference type="Gene3D" id="3.50.50.60">
    <property type="entry name" value="FAD/NAD(P)-binding domain"/>
    <property type="match status" value="2"/>
</dbReference>
<dbReference type="Gene3D" id="1.10.150.570">
    <property type="entry name" value="GidA associated domain, C-terminal subdomain"/>
    <property type="match status" value="1"/>
</dbReference>
<dbReference type="Gene3D" id="1.10.10.1800">
    <property type="entry name" value="tRNA uridine 5-carboxymethylaminomethyl modification enzyme MnmG/GidA"/>
    <property type="match status" value="1"/>
</dbReference>
<dbReference type="HAMAP" id="MF_00129">
    <property type="entry name" value="MnmG_GidA"/>
    <property type="match status" value="1"/>
</dbReference>
<dbReference type="InterPro" id="IPR036188">
    <property type="entry name" value="FAD/NAD-bd_sf"/>
</dbReference>
<dbReference type="InterPro" id="IPR049312">
    <property type="entry name" value="GIDA_C_N"/>
</dbReference>
<dbReference type="InterPro" id="IPR004416">
    <property type="entry name" value="MnmG"/>
</dbReference>
<dbReference type="InterPro" id="IPR002218">
    <property type="entry name" value="MnmG-rel"/>
</dbReference>
<dbReference type="InterPro" id="IPR020595">
    <property type="entry name" value="MnmG-rel_CS"/>
</dbReference>
<dbReference type="InterPro" id="IPR026904">
    <property type="entry name" value="MnmG_C"/>
</dbReference>
<dbReference type="InterPro" id="IPR047001">
    <property type="entry name" value="MnmG_C_subdom"/>
</dbReference>
<dbReference type="InterPro" id="IPR044920">
    <property type="entry name" value="MnmG_C_subdom_sf"/>
</dbReference>
<dbReference type="InterPro" id="IPR040131">
    <property type="entry name" value="MnmG_N"/>
</dbReference>
<dbReference type="NCBIfam" id="TIGR00136">
    <property type="entry name" value="mnmG_gidA"/>
    <property type="match status" value="1"/>
</dbReference>
<dbReference type="PANTHER" id="PTHR11806">
    <property type="entry name" value="GLUCOSE INHIBITED DIVISION PROTEIN A"/>
    <property type="match status" value="1"/>
</dbReference>
<dbReference type="PANTHER" id="PTHR11806:SF0">
    <property type="entry name" value="PROTEIN MTO1 HOMOLOG, MITOCHONDRIAL"/>
    <property type="match status" value="1"/>
</dbReference>
<dbReference type="Pfam" id="PF01134">
    <property type="entry name" value="GIDA"/>
    <property type="match status" value="1"/>
</dbReference>
<dbReference type="Pfam" id="PF21680">
    <property type="entry name" value="GIDA_C_1st"/>
    <property type="match status" value="1"/>
</dbReference>
<dbReference type="Pfam" id="PF13932">
    <property type="entry name" value="SAM_GIDA_C"/>
    <property type="match status" value="1"/>
</dbReference>
<dbReference type="PRINTS" id="PR00411">
    <property type="entry name" value="PNDRDTASEI"/>
</dbReference>
<dbReference type="SMART" id="SM01228">
    <property type="entry name" value="GIDA_assoc_3"/>
    <property type="match status" value="1"/>
</dbReference>
<dbReference type="SUPFAM" id="SSF51905">
    <property type="entry name" value="FAD/NAD(P)-binding domain"/>
    <property type="match status" value="1"/>
</dbReference>
<dbReference type="PROSITE" id="PS01280">
    <property type="entry name" value="GIDA_1"/>
    <property type="match status" value="1"/>
</dbReference>
<dbReference type="PROSITE" id="PS01281">
    <property type="entry name" value="GIDA_2"/>
    <property type="match status" value="1"/>
</dbReference>